<organism>
    <name type="scientific">Persephonella marina (strain DSM 14350 / EX-H1)</name>
    <dbReference type="NCBI Taxonomy" id="123214"/>
    <lineage>
        <taxon>Bacteria</taxon>
        <taxon>Pseudomonadati</taxon>
        <taxon>Aquificota</taxon>
        <taxon>Aquificia</taxon>
        <taxon>Aquificales</taxon>
        <taxon>Hydrogenothermaceae</taxon>
        <taxon>Persephonella</taxon>
    </lineage>
</organism>
<dbReference type="EC" id="4.1.1.50" evidence="1"/>
<dbReference type="EMBL" id="CP001230">
    <property type="protein sequence ID" value="ACO03754.1"/>
    <property type="molecule type" value="Genomic_DNA"/>
</dbReference>
<dbReference type="RefSeq" id="WP_012675993.1">
    <property type="nucleotide sequence ID" value="NC_012440.1"/>
</dbReference>
<dbReference type="SMR" id="C0QRY8"/>
<dbReference type="STRING" id="123214.PERMA_1668"/>
<dbReference type="PaxDb" id="123214-PERMA_1668"/>
<dbReference type="KEGG" id="pmx:PERMA_1668"/>
<dbReference type="eggNOG" id="COG1586">
    <property type="taxonomic scope" value="Bacteria"/>
</dbReference>
<dbReference type="HOGENOM" id="CLU_125470_2_3_0"/>
<dbReference type="OrthoDB" id="5290709at2"/>
<dbReference type="UniPathway" id="UPA00331">
    <property type="reaction ID" value="UER00451"/>
</dbReference>
<dbReference type="Proteomes" id="UP000001366">
    <property type="component" value="Chromosome"/>
</dbReference>
<dbReference type="GO" id="GO:0005829">
    <property type="term" value="C:cytosol"/>
    <property type="evidence" value="ECO:0007669"/>
    <property type="project" value="TreeGrafter"/>
</dbReference>
<dbReference type="GO" id="GO:0004014">
    <property type="term" value="F:adenosylmethionine decarboxylase activity"/>
    <property type="evidence" value="ECO:0007669"/>
    <property type="project" value="UniProtKB-UniRule"/>
</dbReference>
<dbReference type="GO" id="GO:0008295">
    <property type="term" value="P:spermidine biosynthetic process"/>
    <property type="evidence" value="ECO:0007669"/>
    <property type="project" value="UniProtKB-UniRule"/>
</dbReference>
<dbReference type="Gene3D" id="3.60.90.10">
    <property type="entry name" value="S-adenosylmethionine decarboxylase"/>
    <property type="match status" value="1"/>
</dbReference>
<dbReference type="HAMAP" id="MF_00464">
    <property type="entry name" value="AdoMetDC_1"/>
    <property type="match status" value="1"/>
</dbReference>
<dbReference type="InterPro" id="IPR003826">
    <property type="entry name" value="AdoMetDC_fam_prok"/>
</dbReference>
<dbReference type="InterPro" id="IPR016067">
    <property type="entry name" value="S-AdoMet_deCO2ase_core"/>
</dbReference>
<dbReference type="InterPro" id="IPR017716">
    <property type="entry name" value="S-AdoMet_deCOase_pro-enz"/>
</dbReference>
<dbReference type="NCBIfam" id="TIGR03330">
    <property type="entry name" value="SAM_DCase_Bsu"/>
    <property type="match status" value="1"/>
</dbReference>
<dbReference type="PANTHER" id="PTHR33866">
    <property type="entry name" value="S-ADENOSYLMETHIONINE DECARBOXYLASE PROENZYME"/>
    <property type="match status" value="1"/>
</dbReference>
<dbReference type="PANTHER" id="PTHR33866:SF2">
    <property type="entry name" value="S-ADENOSYLMETHIONINE DECARBOXYLASE PROENZYME"/>
    <property type="match status" value="1"/>
</dbReference>
<dbReference type="Pfam" id="PF02675">
    <property type="entry name" value="AdoMet_dc"/>
    <property type="match status" value="1"/>
</dbReference>
<dbReference type="SUPFAM" id="SSF56276">
    <property type="entry name" value="S-adenosylmethionine decarboxylase"/>
    <property type="match status" value="1"/>
</dbReference>
<reference key="1">
    <citation type="journal article" date="2009" name="J. Bacteriol.">
        <title>Complete and draft genome sequences of six members of the Aquificales.</title>
        <authorList>
            <person name="Reysenbach A.-L."/>
            <person name="Hamamura N."/>
            <person name="Podar M."/>
            <person name="Griffiths E."/>
            <person name="Ferreira S."/>
            <person name="Hochstein R."/>
            <person name="Heidelberg J."/>
            <person name="Johnson J."/>
            <person name="Mead D."/>
            <person name="Pohorille A."/>
            <person name="Sarmiento M."/>
            <person name="Schweighofer K."/>
            <person name="Seshadri R."/>
            <person name="Voytek M.A."/>
        </authorList>
    </citation>
    <scope>NUCLEOTIDE SEQUENCE [LARGE SCALE GENOMIC DNA]</scope>
    <source>
        <strain>DSM 14350 / EX-H1</strain>
    </source>
</reference>
<keyword id="KW-0068">Autocatalytic cleavage</keyword>
<keyword id="KW-0210">Decarboxylase</keyword>
<keyword id="KW-0456">Lyase</keyword>
<keyword id="KW-0620">Polyamine biosynthesis</keyword>
<keyword id="KW-0670">Pyruvate</keyword>
<keyword id="KW-1185">Reference proteome</keyword>
<keyword id="KW-0949">S-adenosyl-L-methionine</keyword>
<keyword id="KW-0704">Schiff base</keyword>
<keyword id="KW-0745">Spermidine biosynthesis</keyword>
<keyword id="KW-0865">Zymogen</keyword>
<name>SPEH_PERMH</name>
<comment type="function">
    <text evidence="1">Catalyzes the decarboxylation of S-adenosylmethionine to S-adenosylmethioninamine (dcAdoMet), the propylamine donor required for the synthesis of the polyamines spermine and spermidine from the diamine putrescine.</text>
</comment>
<comment type="catalytic activity">
    <reaction evidence="1">
        <text>S-adenosyl-L-methionine + H(+) = S-adenosyl 3-(methylsulfanyl)propylamine + CO2</text>
        <dbReference type="Rhea" id="RHEA:15981"/>
        <dbReference type="ChEBI" id="CHEBI:15378"/>
        <dbReference type="ChEBI" id="CHEBI:16526"/>
        <dbReference type="ChEBI" id="CHEBI:57443"/>
        <dbReference type="ChEBI" id="CHEBI:59789"/>
        <dbReference type="EC" id="4.1.1.50"/>
    </reaction>
</comment>
<comment type="cofactor">
    <cofactor evidence="1">
        <name>pyruvate</name>
        <dbReference type="ChEBI" id="CHEBI:15361"/>
    </cofactor>
    <text evidence="1">Binds 1 pyruvoyl group covalently per subunit.</text>
</comment>
<comment type="pathway">
    <text evidence="1">Amine and polyamine biosynthesis; S-adenosylmethioninamine biosynthesis; S-adenosylmethioninamine from S-adenosyl-L-methionine: step 1/1.</text>
</comment>
<comment type="subunit">
    <text evidence="1">Heterotetramer of two alpha and two beta chains arranged as a dimer of alpha/beta heterodimers.</text>
</comment>
<comment type="PTM">
    <text evidence="1">Is synthesized initially as an inactive proenzyme. Formation of the active enzyme involves a self-maturation process in which the active site pyruvoyl group is generated from an internal serine residue via an autocatalytic post-translational modification. Two non-identical subunits are generated from the proenzyme in this reaction, and the pyruvate is formed at the N-terminus of the alpha chain, which is derived from the carboxyl end of the proenzyme. The post-translation cleavage follows an unusual pathway, termed non-hydrolytic serinolysis, in which the side chain hydroxyl group of the serine supplies its oxygen atom to form the C-terminus of the beta chain, while the remainder of the serine residue undergoes an oxidative deamination to produce ammonia and the pyruvoyl group blocking the N-terminus of the alpha chain.</text>
</comment>
<comment type="similarity">
    <text evidence="1">Belongs to the prokaryotic AdoMetDC family. Type 1 subfamily.</text>
</comment>
<sequence length="133" mass="15064">MEKTLGLHILADLYGVEFDKIDHVEDVRELLEGAVKYAGLSKLSSHFHQFYPHGATGVILLEESHISIHTWPEHGYAAIDVYTCGGKEKTFKAMEYILKVLKPKRIDEKVAERGTVPVHKEATHIEKIELETV</sequence>
<protein>
    <recommendedName>
        <fullName evidence="1">S-adenosylmethionine decarboxylase proenzyme</fullName>
        <shortName evidence="1">AdoMetDC</shortName>
        <shortName evidence="1">SAMDC</shortName>
        <ecNumber evidence="1">4.1.1.50</ecNumber>
    </recommendedName>
    <component>
        <recommendedName>
            <fullName evidence="1">S-adenosylmethionine decarboxylase beta chain</fullName>
        </recommendedName>
    </component>
    <component>
        <recommendedName>
            <fullName evidence="1">S-adenosylmethionine decarboxylase alpha chain</fullName>
        </recommendedName>
    </component>
</protein>
<gene>
    <name evidence="1" type="primary">speH</name>
    <name type="ordered locus">PERMA_1668</name>
</gene>
<feature type="chain" id="PRO_1000193193" description="S-adenosylmethionine decarboxylase beta chain" evidence="1">
    <location>
        <begin position="1"/>
        <end position="63"/>
    </location>
</feature>
<feature type="chain" id="PRO_1000193194" description="S-adenosylmethionine decarboxylase alpha chain" evidence="1">
    <location>
        <begin position="64"/>
        <end position="133"/>
    </location>
</feature>
<feature type="active site" description="Schiff-base intermediate with substrate; via pyruvic acid" evidence="1">
    <location>
        <position position="64"/>
    </location>
</feature>
<feature type="active site" description="Proton acceptor; for processing activity" evidence="1">
    <location>
        <position position="69"/>
    </location>
</feature>
<feature type="active site" description="Proton donor; for catalytic activity" evidence="1">
    <location>
        <position position="84"/>
    </location>
</feature>
<feature type="site" description="Cleavage (non-hydrolytic); by autolysis" evidence="1">
    <location>
        <begin position="63"/>
        <end position="64"/>
    </location>
</feature>
<feature type="modified residue" description="Pyruvic acid (Ser); by autocatalysis" evidence="1">
    <location>
        <position position="64"/>
    </location>
</feature>
<proteinExistence type="inferred from homology"/>
<accession>C0QRY8</accession>
<evidence type="ECO:0000255" key="1">
    <source>
        <dbReference type="HAMAP-Rule" id="MF_00464"/>
    </source>
</evidence>